<gene>
    <name evidence="1" type="primary">rpsK</name>
    <name type="ordered locus">Shal_4112</name>
</gene>
<dbReference type="EMBL" id="CP000931">
    <property type="protein sequence ID" value="ABZ78652.1"/>
    <property type="molecule type" value="Genomic_DNA"/>
</dbReference>
<dbReference type="RefSeq" id="WP_012153476.1">
    <property type="nucleotide sequence ID" value="NC_010334.1"/>
</dbReference>
<dbReference type="SMR" id="B0TLZ0"/>
<dbReference type="STRING" id="458817.Shal_4112"/>
<dbReference type="KEGG" id="shl:Shal_4112"/>
<dbReference type="eggNOG" id="COG0100">
    <property type="taxonomic scope" value="Bacteria"/>
</dbReference>
<dbReference type="HOGENOM" id="CLU_072439_5_0_6"/>
<dbReference type="OrthoDB" id="9806415at2"/>
<dbReference type="Proteomes" id="UP000001317">
    <property type="component" value="Chromosome"/>
</dbReference>
<dbReference type="GO" id="GO:1990904">
    <property type="term" value="C:ribonucleoprotein complex"/>
    <property type="evidence" value="ECO:0007669"/>
    <property type="project" value="UniProtKB-KW"/>
</dbReference>
<dbReference type="GO" id="GO:0005840">
    <property type="term" value="C:ribosome"/>
    <property type="evidence" value="ECO:0007669"/>
    <property type="project" value="UniProtKB-KW"/>
</dbReference>
<dbReference type="GO" id="GO:0019843">
    <property type="term" value="F:rRNA binding"/>
    <property type="evidence" value="ECO:0007669"/>
    <property type="project" value="UniProtKB-UniRule"/>
</dbReference>
<dbReference type="GO" id="GO:0003735">
    <property type="term" value="F:structural constituent of ribosome"/>
    <property type="evidence" value="ECO:0007669"/>
    <property type="project" value="InterPro"/>
</dbReference>
<dbReference type="GO" id="GO:0006412">
    <property type="term" value="P:translation"/>
    <property type="evidence" value="ECO:0007669"/>
    <property type="project" value="UniProtKB-UniRule"/>
</dbReference>
<dbReference type="FunFam" id="3.30.420.80:FF:000001">
    <property type="entry name" value="30S ribosomal protein S11"/>
    <property type="match status" value="1"/>
</dbReference>
<dbReference type="Gene3D" id="3.30.420.80">
    <property type="entry name" value="Ribosomal protein S11"/>
    <property type="match status" value="1"/>
</dbReference>
<dbReference type="HAMAP" id="MF_01310">
    <property type="entry name" value="Ribosomal_uS11"/>
    <property type="match status" value="1"/>
</dbReference>
<dbReference type="InterPro" id="IPR001971">
    <property type="entry name" value="Ribosomal_uS11"/>
</dbReference>
<dbReference type="InterPro" id="IPR019981">
    <property type="entry name" value="Ribosomal_uS11_bac-type"/>
</dbReference>
<dbReference type="InterPro" id="IPR018102">
    <property type="entry name" value="Ribosomal_uS11_CS"/>
</dbReference>
<dbReference type="InterPro" id="IPR036967">
    <property type="entry name" value="Ribosomal_uS11_sf"/>
</dbReference>
<dbReference type="NCBIfam" id="NF003698">
    <property type="entry name" value="PRK05309.1"/>
    <property type="match status" value="1"/>
</dbReference>
<dbReference type="NCBIfam" id="TIGR03632">
    <property type="entry name" value="uS11_bact"/>
    <property type="match status" value="1"/>
</dbReference>
<dbReference type="PANTHER" id="PTHR11759">
    <property type="entry name" value="40S RIBOSOMAL PROTEIN S14/30S RIBOSOMAL PROTEIN S11"/>
    <property type="match status" value="1"/>
</dbReference>
<dbReference type="Pfam" id="PF00411">
    <property type="entry name" value="Ribosomal_S11"/>
    <property type="match status" value="1"/>
</dbReference>
<dbReference type="PIRSF" id="PIRSF002131">
    <property type="entry name" value="Ribosomal_S11"/>
    <property type="match status" value="1"/>
</dbReference>
<dbReference type="SUPFAM" id="SSF53137">
    <property type="entry name" value="Translational machinery components"/>
    <property type="match status" value="1"/>
</dbReference>
<dbReference type="PROSITE" id="PS00054">
    <property type="entry name" value="RIBOSOMAL_S11"/>
    <property type="match status" value="1"/>
</dbReference>
<comment type="function">
    <text evidence="1">Located on the platform of the 30S subunit, it bridges several disparate RNA helices of the 16S rRNA. Forms part of the Shine-Dalgarno cleft in the 70S ribosome.</text>
</comment>
<comment type="subunit">
    <text evidence="1">Part of the 30S ribosomal subunit. Interacts with proteins S7 and S18. Binds to IF-3.</text>
</comment>
<comment type="similarity">
    <text evidence="1">Belongs to the universal ribosomal protein uS11 family.</text>
</comment>
<organism>
    <name type="scientific">Shewanella halifaxensis (strain HAW-EB4)</name>
    <dbReference type="NCBI Taxonomy" id="458817"/>
    <lineage>
        <taxon>Bacteria</taxon>
        <taxon>Pseudomonadati</taxon>
        <taxon>Pseudomonadota</taxon>
        <taxon>Gammaproteobacteria</taxon>
        <taxon>Alteromonadales</taxon>
        <taxon>Shewanellaceae</taxon>
        <taxon>Shewanella</taxon>
    </lineage>
</organism>
<feature type="chain" id="PRO_1000086211" description="Small ribosomal subunit protein uS11">
    <location>
        <begin position="1"/>
        <end position="130"/>
    </location>
</feature>
<reference key="1">
    <citation type="submission" date="2008-01" db="EMBL/GenBank/DDBJ databases">
        <title>Complete sequence of Shewanella halifaxensis HAW-EB4.</title>
        <authorList>
            <consortium name="US DOE Joint Genome Institute"/>
            <person name="Copeland A."/>
            <person name="Lucas S."/>
            <person name="Lapidus A."/>
            <person name="Glavina del Rio T."/>
            <person name="Dalin E."/>
            <person name="Tice H."/>
            <person name="Bruce D."/>
            <person name="Goodwin L."/>
            <person name="Pitluck S."/>
            <person name="Sims D."/>
            <person name="Brettin T."/>
            <person name="Detter J.C."/>
            <person name="Han C."/>
            <person name="Kuske C.R."/>
            <person name="Schmutz J."/>
            <person name="Larimer F."/>
            <person name="Land M."/>
            <person name="Hauser L."/>
            <person name="Kyrpides N."/>
            <person name="Kim E."/>
            <person name="Zhao J.-S."/>
            <person name="Richardson P."/>
        </authorList>
    </citation>
    <scope>NUCLEOTIDE SEQUENCE [LARGE SCALE GENOMIC DNA]</scope>
    <source>
        <strain>HAW-EB4</strain>
    </source>
</reference>
<protein>
    <recommendedName>
        <fullName evidence="1">Small ribosomal subunit protein uS11</fullName>
    </recommendedName>
    <alternativeName>
        <fullName evidence="2">30S ribosomal protein S11</fullName>
    </alternativeName>
</protein>
<proteinExistence type="inferred from homology"/>
<accession>B0TLZ0</accession>
<name>RS11_SHEHH</name>
<sequence>MAKVPSRSPRKRVRKQVADGMAHIHASFNNTIITITDRQGNALSWATSGGSGFRGSRKSTPFAAQVAAERAGTAAQDYGVKNLEVFVKGPGPGRESAIRALNSVGYKITNITDVTPIPHNGCRPPKKRRV</sequence>
<evidence type="ECO:0000255" key="1">
    <source>
        <dbReference type="HAMAP-Rule" id="MF_01310"/>
    </source>
</evidence>
<evidence type="ECO:0000305" key="2"/>
<keyword id="KW-0687">Ribonucleoprotein</keyword>
<keyword id="KW-0689">Ribosomal protein</keyword>
<keyword id="KW-0694">RNA-binding</keyword>
<keyword id="KW-0699">rRNA-binding</keyword>